<protein>
    <recommendedName>
        <fullName>Zinc-containing ferredoxin</fullName>
    </recommendedName>
    <alternativeName>
        <fullName>Seven-iron ferredoxin</fullName>
    </alternativeName>
</protein>
<comment type="function">
    <text>Ferredoxins are iron-sulfur proteins that transfer electrons in a wide variety of metabolic reactions.</text>
</comment>
<comment type="cofactor">
    <cofactor evidence="1">
        <name>[3Fe-4S] cluster</name>
        <dbReference type="ChEBI" id="CHEBI:21137"/>
    </cofactor>
    <text evidence="1">Binds 1 [3Fe-4S] cluster.</text>
</comment>
<comment type="cofactor">
    <cofactor evidence="1">
        <name>[4Fe-4S] cluster</name>
        <dbReference type="ChEBI" id="CHEBI:49883"/>
    </cofactor>
    <text evidence="1">Binds 1 [4Fe-4S] cluster.</text>
</comment>
<comment type="cofactor">
    <cofactor evidence="1">
        <name>Zn(2+)</name>
        <dbReference type="ChEBI" id="CHEBI:29105"/>
    </cofactor>
    <text evidence="1">Binds 1 zinc ion.</text>
</comment>
<organism>
    <name type="scientific">Metallosphaera prunae</name>
    <dbReference type="NCBI Taxonomy" id="47304"/>
    <lineage>
        <taxon>Archaea</taxon>
        <taxon>Thermoproteota</taxon>
        <taxon>Thermoprotei</taxon>
        <taxon>Sulfolobales</taxon>
        <taxon>Sulfolobaceae</taxon>
        <taxon>Metallosphaera</taxon>
    </lineage>
</organism>
<sequence length="38" mass="4006">GIDPNFRTSRPVTGDHAGHKVYAPADPPVKEKALGIHG</sequence>
<reference key="1">
    <citation type="journal article" date="1998" name="J. Biol. Inorg. Chem.">
        <title>Di-cluster, seven iron ferredoxins from hyperthermophilic Sulfolobales.</title>
        <authorList>
            <person name="Gomes C.M."/>
            <person name="Faria A."/>
            <person name="Carita J."/>
            <person name="Mendes J.C."/>
            <person name="Regalla M."/>
            <person name="Chicau P."/>
            <person name="Huber H."/>
            <person name="Stetter K.O."/>
            <person name="Teixeira M."/>
        </authorList>
    </citation>
    <scope>PROTEIN SEQUENCE</scope>
    <scope>METHYLATION AT LYS-30</scope>
</reference>
<evidence type="ECO:0000250" key="1"/>
<evidence type="ECO:0000256" key="2">
    <source>
        <dbReference type="SAM" id="MobiDB-lite"/>
    </source>
</evidence>
<evidence type="ECO:0000269" key="3">
    <source ref="1"/>
</evidence>
<keyword id="KW-0003">3Fe-4S</keyword>
<keyword id="KW-0004">4Fe-4S</keyword>
<keyword id="KW-0903">Direct protein sequencing</keyword>
<keyword id="KW-0249">Electron transport</keyword>
<keyword id="KW-0408">Iron</keyword>
<keyword id="KW-0411">Iron-sulfur</keyword>
<keyword id="KW-0479">Metal-binding</keyword>
<keyword id="KW-0488">Methylation</keyword>
<keyword id="KW-0677">Repeat</keyword>
<keyword id="KW-0813">Transport</keyword>
<keyword id="KW-0862">Zinc</keyword>
<dbReference type="GO" id="GO:0051538">
    <property type="term" value="F:3 iron, 4 sulfur cluster binding"/>
    <property type="evidence" value="ECO:0007669"/>
    <property type="project" value="UniProtKB-KW"/>
</dbReference>
<dbReference type="GO" id="GO:0051539">
    <property type="term" value="F:4 iron, 4 sulfur cluster binding"/>
    <property type="evidence" value="ECO:0007669"/>
    <property type="project" value="UniProtKB-KW"/>
</dbReference>
<dbReference type="GO" id="GO:0046872">
    <property type="term" value="F:metal ion binding"/>
    <property type="evidence" value="ECO:0007669"/>
    <property type="project" value="UniProtKB-KW"/>
</dbReference>
<dbReference type="Gene3D" id="3.30.70.20">
    <property type="match status" value="1"/>
</dbReference>
<accession>P81542</accession>
<proteinExistence type="evidence at protein level"/>
<feature type="chain" id="PRO_0000159175" description="Zinc-containing ferredoxin">
    <location>
        <begin position="1"/>
        <end position="38" status="greater than"/>
    </location>
</feature>
<feature type="region of interest" description="Disordered" evidence="2">
    <location>
        <begin position="1"/>
        <end position="38"/>
    </location>
</feature>
<feature type="region of interest" description="N-terminal extension">
    <location>
        <begin position="1"/>
        <end position="38"/>
    </location>
</feature>
<feature type="compositionally biased region" description="Polar residues" evidence="2">
    <location>
        <begin position="1"/>
        <end position="11"/>
    </location>
</feature>
<feature type="compositionally biased region" description="Basic and acidic residues" evidence="2">
    <location>
        <begin position="28"/>
        <end position="38"/>
    </location>
</feature>
<feature type="binding site">
    <location>
        <position position="16"/>
    </location>
    <ligand>
        <name>Zn(2+)</name>
        <dbReference type="ChEBI" id="CHEBI:29105"/>
    </ligand>
</feature>
<feature type="binding site">
    <location>
        <position position="19"/>
    </location>
    <ligand>
        <name>Zn(2+)</name>
        <dbReference type="ChEBI" id="CHEBI:29105"/>
    </ligand>
</feature>
<feature type="binding site">
    <location>
        <position position="37"/>
    </location>
    <ligand>
        <name>Zn(2+)</name>
        <dbReference type="ChEBI" id="CHEBI:29105"/>
    </ligand>
</feature>
<feature type="modified residue" description="N6-methyllysine" evidence="3">
    <location>
        <position position="30"/>
    </location>
</feature>
<feature type="non-terminal residue">
    <location>
        <position position="38"/>
    </location>
</feature>
<name>FER_METPR</name>
<gene>
    <name type="primary">zfx</name>
</gene>